<accession>O83698</accession>
<gene>
    <name type="ordered locus">TP_0700</name>
</gene>
<reference key="1">
    <citation type="journal article" date="1998" name="Science">
        <title>Complete genome sequence of Treponema pallidum, the syphilis spirochete.</title>
        <authorList>
            <person name="Fraser C.M."/>
            <person name="Norris S.J."/>
            <person name="Weinstock G.M."/>
            <person name="White O."/>
            <person name="Sutton G.G."/>
            <person name="Dodson R.J."/>
            <person name="Gwinn M.L."/>
            <person name="Hickey E.K."/>
            <person name="Clayton R.A."/>
            <person name="Ketchum K.A."/>
            <person name="Sodergren E."/>
            <person name="Hardham J.M."/>
            <person name="McLeod M.P."/>
            <person name="Salzberg S.L."/>
            <person name="Peterson J.D."/>
            <person name="Khalak H.G."/>
            <person name="Richardson D.L."/>
            <person name="Howell J.K."/>
            <person name="Chidambaram M."/>
            <person name="Utterback T.R."/>
            <person name="McDonald L.A."/>
            <person name="Artiach P."/>
            <person name="Bowman C."/>
            <person name="Cotton M.D."/>
            <person name="Fujii C."/>
            <person name="Garland S.A."/>
            <person name="Hatch B."/>
            <person name="Horst K."/>
            <person name="Roberts K.M."/>
            <person name="Sandusky M."/>
            <person name="Weidman J.F."/>
            <person name="Smith H.O."/>
            <person name="Venter J.C."/>
        </authorList>
    </citation>
    <scope>NUCLEOTIDE SEQUENCE [LARGE SCALE GENOMIC DNA]</scope>
    <source>
        <strain>Nichols</strain>
    </source>
</reference>
<keyword id="KW-1185">Reference proteome</keyword>
<name>Y700_TREPA</name>
<dbReference type="EMBL" id="AE000520">
    <property type="protein sequence ID" value="AAC65669.1"/>
    <property type="molecule type" value="Genomic_DNA"/>
</dbReference>
<dbReference type="PIR" id="A71294">
    <property type="entry name" value="A71294"/>
</dbReference>
<dbReference type="RefSeq" id="WP_010882145.1">
    <property type="nucleotide sequence ID" value="NC_021490.2"/>
</dbReference>
<dbReference type="IntAct" id="O83698">
    <property type="interactions" value="10"/>
</dbReference>
<dbReference type="STRING" id="243276.TP_0700"/>
<dbReference type="EnsemblBacteria" id="AAC65669">
    <property type="protein sequence ID" value="AAC65669"/>
    <property type="gene ID" value="TP_0700"/>
</dbReference>
<dbReference type="KEGG" id="tpa:TP_0700"/>
<dbReference type="KEGG" id="tpw:TPANIC_0700"/>
<dbReference type="HOGENOM" id="CLU_154673_0_0_12"/>
<dbReference type="OrthoDB" id="369831at2"/>
<dbReference type="Proteomes" id="UP000000811">
    <property type="component" value="Chromosome"/>
</dbReference>
<proteinExistence type="predicted"/>
<feature type="chain" id="PRO_0000202306" description="Uncharacterized protein TP_0700">
    <location>
        <begin position="1"/>
        <end position="130"/>
    </location>
</feature>
<sequence>MVMAAAPLQNLCYDGLLQVTSGGNISLPVPSNQVIYAHFEHVDATPAEQGQAGVSVSELQILDALVERLIVQRRVAAEAADMAVQKRQETLLRAAELFSQKQVDETKRRGESLPYTSVEVQGPELFDLRA</sequence>
<protein>
    <recommendedName>
        <fullName>Uncharacterized protein TP_0700</fullName>
    </recommendedName>
</protein>
<organism>
    <name type="scientific">Treponema pallidum (strain Nichols)</name>
    <dbReference type="NCBI Taxonomy" id="243276"/>
    <lineage>
        <taxon>Bacteria</taxon>
        <taxon>Pseudomonadati</taxon>
        <taxon>Spirochaetota</taxon>
        <taxon>Spirochaetia</taxon>
        <taxon>Spirochaetales</taxon>
        <taxon>Treponemataceae</taxon>
        <taxon>Treponema</taxon>
    </lineage>
</organism>